<evidence type="ECO:0000250" key="1">
    <source>
        <dbReference type="UniProtKB" id="Q86WP2"/>
    </source>
</evidence>
<evidence type="ECO:0000256" key="2">
    <source>
        <dbReference type="SAM" id="MobiDB-lite"/>
    </source>
</evidence>
<evidence type="ECO:0000269" key="3">
    <source>
    </source>
</evidence>
<evidence type="ECO:0000303" key="4">
    <source>
    </source>
</evidence>
<evidence type="ECO:0000303" key="5">
    <source>
    </source>
</evidence>
<evidence type="ECO:0000303" key="6">
    <source>
    </source>
</evidence>
<evidence type="ECO:0000305" key="7"/>
<evidence type="ECO:0007744" key="8">
    <source>
    </source>
</evidence>
<evidence type="ECO:0007744" key="9">
    <source>
    </source>
</evidence>
<sequence>MAQHDFAPAWLNFPTPPSSTKSSLNFEKHSENFSWTENRYDVSRRRHNSSDGFDSGIGRPNGGNFGRKEKNGWRTHGRNGTENINHRGGYHGGNSRSRSSIFHSGKSQGLHENSIPDNETGRKEDKRERRQFEAEDFPSLNPEYEREPNQNKSLAAGVWDYPPNPKSRTPRMLVIKKGNTKDLQLSGFPVAGNLQSQPVKNGTGPSVYKGLVPKPAVPPTKPTQWKSQTKENKVGTSFSHESTYGVGNFNTFKSTAKNISPSTNSVKECNRSNSSSPVDKLNQQPRLTKLTRMRSDKKSEFLKALKRDRVEEEHEDESHAGSEKDDDSFNLHNSNTTHQERDINRNFDENEIPQENGNASMISQQIIRSSTFPQTDVLSSSLEAEHRLLKEMGWQEDSENDETCAPLTEDEMREFQVISEQLQKNGLRKNGILKNGLICDFKFGPWKNSTFKPTIENDDTETSSSDTSDDDDV</sequence>
<proteinExistence type="evidence at protein level"/>
<accession>Q6NXH3</accession>
<accession>Q3TQR2</accession>
<accession>Q3TSN7</accession>
<accession>Q6TYE7</accession>
<accession>Q8C498</accession>
<accession>Q8R252</accession>
<name>GPBP1_MOUSE</name>
<comment type="function">
    <text evidence="3">Functions as a GC-rich promoter-specific transactivating transcription factor.</text>
</comment>
<comment type="subunit">
    <text evidence="3">Interacts with GTF2B, GTF2F2, RNA polymerase II and TBP.</text>
</comment>
<comment type="subcellular location">
    <subcellularLocation>
        <location evidence="3">Nucleus</location>
    </subcellularLocation>
</comment>
<comment type="alternative products">
    <event type="alternative splicing"/>
    <isoform>
        <id>Q6NXH3-1</id>
        <name>1</name>
        <sequence type="displayed"/>
    </isoform>
    <isoform>
        <id>Q6NXH3-2</id>
        <name>2</name>
        <sequence type="described" ref="VSP_032139"/>
    </isoform>
    <isoform>
        <id>Q6NXH3-3</id>
        <name>3</name>
        <sequence type="described" ref="VSP_032138 VSP_032139"/>
    </isoform>
</comment>
<comment type="tissue specificity">
    <text evidence="3">Ubiquitously expressed (at protein level).</text>
</comment>
<comment type="similarity">
    <text evidence="7">Belongs to the vasculin family.</text>
</comment>
<comment type="sequence caution" evidence="7">
    <conflict type="erroneous initiation">
        <sequence resource="EMBL-CDS" id="AAH16083"/>
    </conflict>
</comment>
<dbReference type="EMBL" id="AY382529">
    <property type="protein sequence ID" value="AAQ88446.1"/>
    <property type="molecule type" value="mRNA"/>
</dbReference>
<dbReference type="EMBL" id="AK082704">
    <property type="protein sequence ID" value="BAC38578.1"/>
    <property type="molecule type" value="mRNA"/>
</dbReference>
<dbReference type="EMBL" id="AK135728">
    <property type="protein sequence ID" value="BAE22631.1"/>
    <property type="molecule type" value="mRNA"/>
</dbReference>
<dbReference type="EMBL" id="AK145318">
    <property type="protein sequence ID" value="BAE26364.1"/>
    <property type="molecule type" value="mRNA"/>
</dbReference>
<dbReference type="EMBL" id="AK161928">
    <property type="protein sequence ID" value="BAE36638.1"/>
    <property type="molecule type" value="mRNA"/>
</dbReference>
<dbReference type="EMBL" id="AK163370">
    <property type="protein sequence ID" value="BAE37320.1"/>
    <property type="molecule type" value="mRNA"/>
</dbReference>
<dbReference type="EMBL" id="AK163390">
    <property type="protein sequence ID" value="BAE37330.1"/>
    <property type="molecule type" value="mRNA"/>
</dbReference>
<dbReference type="EMBL" id="AK169406">
    <property type="protein sequence ID" value="BAE41152.1"/>
    <property type="molecule type" value="mRNA"/>
</dbReference>
<dbReference type="EMBL" id="BC016083">
    <property type="protein sequence ID" value="AAH16083.1"/>
    <property type="status" value="ALT_INIT"/>
    <property type="molecule type" value="mRNA"/>
</dbReference>
<dbReference type="EMBL" id="BC067075">
    <property type="protein sequence ID" value="AAH67075.1"/>
    <property type="molecule type" value="mRNA"/>
</dbReference>
<dbReference type="EMBL" id="BC094888">
    <property type="protein sequence ID" value="AAH94888.1"/>
    <property type="molecule type" value="mRNA"/>
</dbReference>
<dbReference type="CCDS" id="CCDS26769.1">
    <molecule id="Q6NXH3-2"/>
</dbReference>
<dbReference type="CCDS" id="CCDS49362.1">
    <molecule id="Q6NXH3-1"/>
</dbReference>
<dbReference type="RefSeq" id="NP_001116435.1">
    <molecule id="Q6NXH3-1"/>
    <property type="nucleotide sequence ID" value="NM_001122963.3"/>
</dbReference>
<dbReference type="RefSeq" id="NP_001348852.1">
    <molecule id="Q6NXH3-3"/>
    <property type="nucleotide sequence ID" value="NM_001361923.2"/>
</dbReference>
<dbReference type="RefSeq" id="NP_082763.3">
    <molecule id="Q6NXH3-2"/>
    <property type="nucleotide sequence ID" value="NM_028487.4"/>
</dbReference>
<dbReference type="RefSeq" id="XP_006517835.1">
    <molecule id="Q6NXH3-2"/>
    <property type="nucleotide sequence ID" value="XM_006517772.2"/>
</dbReference>
<dbReference type="RefSeq" id="XP_006517836.1">
    <property type="nucleotide sequence ID" value="XM_006517773.3"/>
</dbReference>
<dbReference type="RefSeq" id="XP_017171102.1">
    <property type="nucleotide sequence ID" value="XM_017315613.1"/>
</dbReference>
<dbReference type="RefSeq" id="XP_017171103.1">
    <property type="nucleotide sequence ID" value="XM_017315614.1"/>
</dbReference>
<dbReference type="RefSeq" id="XP_030103295.1">
    <molecule id="Q6NXH3-1"/>
    <property type="nucleotide sequence ID" value="XM_030247435.2"/>
</dbReference>
<dbReference type="RefSeq" id="XP_030103296.1">
    <molecule id="Q6NXH3-3"/>
    <property type="nucleotide sequence ID" value="XM_030247436.2"/>
</dbReference>
<dbReference type="RefSeq" id="XP_036014086.1">
    <molecule id="Q6NXH3-3"/>
    <property type="nucleotide sequence ID" value="XM_036158193.1"/>
</dbReference>
<dbReference type="BioGRID" id="215884">
    <property type="interactions" value="5"/>
</dbReference>
<dbReference type="FunCoup" id="Q6NXH3">
    <property type="interactions" value="4654"/>
</dbReference>
<dbReference type="IntAct" id="Q6NXH3">
    <property type="interactions" value="1"/>
</dbReference>
<dbReference type="STRING" id="10090.ENSMUSP00000048240"/>
<dbReference type="GlyGen" id="Q6NXH3">
    <property type="glycosylation" value="2 sites, 2 N-linked glycans (2 sites)"/>
</dbReference>
<dbReference type="iPTMnet" id="Q6NXH3"/>
<dbReference type="PhosphoSitePlus" id="Q6NXH3"/>
<dbReference type="jPOST" id="Q6NXH3"/>
<dbReference type="PaxDb" id="10090-ENSMUSP00000048240"/>
<dbReference type="PeptideAtlas" id="Q6NXH3"/>
<dbReference type="ProteomicsDB" id="267757">
    <molecule id="Q6NXH3-1"/>
</dbReference>
<dbReference type="ProteomicsDB" id="267758">
    <molecule id="Q6NXH3-2"/>
</dbReference>
<dbReference type="ProteomicsDB" id="267759">
    <molecule id="Q6NXH3-3"/>
</dbReference>
<dbReference type="Pumba" id="Q6NXH3"/>
<dbReference type="DNASU" id="73274"/>
<dbReference type="Ensembl" id="ENSMUST00000047627.14">
    <molecule id="Q6NXH3-2"/>
    <property type="protein sequence ID" value="ENSMUSP00000048240.8"/>
    <property type="gene ID" value="ENSMUSG00000032745.19"/>
</dbReference>
<dbReference type="Ensembl" id="ENSMUST00000091236.11">
    <molecule id="Q6NXH3-1"/>
    <property type="protein sequence ID" value="ENSMUSP00000088777.5"/>
    <property type="gene ID" value="ENSMUSG00000032745.19"/>
</dbReference>
<dbReference type="GeneID" id="73274"/>
<dbReference type="KEGG" id="mmu:73274"/>
<dbReference type="UCSC" id="uc007rvv.2">
    <molecule id="Q6NXH3-3"/>
    <property type="organism name" value="mouse"/>
</dbReference>
<dbReference type="UCSC" id="uc007rvw.2">
    <molecule id="Q6NXH3-2"/>
    <property type="organism name" value="mouse"/>
</dbReference>
<dbReference type="UCSC" id="uc007rvx.2">
    <molecule id="Q6NXH3-1"/>
    <property type="organism name" value="mouse"/>
</dbReference>
<dbReference type="AGR" id="MGI:1920524"/>
<dbReference type="CTD" id="65056"/>
<dbReference type="MGI" id="MGI:1920524">
    <property type="gene designation" value="Gpbp1"/>
</dbReference>
<dbReference type="VEuPathDB" id="HostDB:ENSMUSG00000032745"/>
<dbReference type="eggNOG" id="ENOG502QR5W">
    <property type="taxonomic scope" value="Eukaryota"/>
</dbReference>
<dbReference type="GeneTree" id="ENSGT00420000029753"/>
<dbReference type="HOGENOM" id="CLU_045487_0_0_1"/>
<dbReference type="InParanoid" id="Q6NXH3"/>
<dbReference type="OMA" id="WREDSEN"/>
<dbReference type="OrthoDB" id="38613at9989"/>
<dbReference type="PhylomeDB" id="Q6NXH3"/>
<dbReference type="TreeFam" id="TF332220"/>
<dbReference type="BioGRID-ORCS" id="73274">
    <property type="hits" value="8 hits in 79 CRISPR screens"/>
</dbReference>
<dbReference type="ChiTaRS" id="Gpbp1">
    <property type="organism name" value="mouse"/>
</dbReference>
<dbReference type="PRO" id="PR:Q6NXH3"/>
<dbReference type="Proteomes" id="UP000000589">
    <property type="component" value="Chromosome 13"/>
</dbReference>
<dbReference type="RNAct" id="Q6NXH3">
    <property type="molecule type" value="protein"/>
</dbReference>
<dbReference type="Bgee" id="ENSMUSG00000032745">
    <property type="expression patterns" value="Expressed in animal zygote and 253 other cell types or tissues"/>
</dbReference>
<dbReference type="ExpressionAtlas" id="Q6NXH3">
    <property type="expression patterns" value="baseline and differential"/>
</dbReference>
<dbReference type="GO" id="GO:0005829">
    <property type="term" value="C:cytosol"/>
    <property type="evidence" value="ECO:0007669"/>
    <property type="project" value="Ensembl"/>
</dbReference>
<dbReference type="GO" id="GO:0005634">
    <property type="term" value="C:nucleus"/>
    <property type="evidence" value="ECO:0000314"/>
    <property type="project" value="MGI"/>
</dbReference>
<dbReference type="GO" id="GO:0005886">
    <property type="term" value="C:plasma membrane"/>
    <property type="evidence" value="ECO:0007669"/>
    <property type="project" value="Ensembl"/>
</dbReference>
<dbReference type="GO" id="GO:0003677">
    <property type="term" value="F:DNA binding"/>
    <property type="evidence" value="ECO:0000314"/>
    <property type="project" value="MGI"/>
</dbReference>
<dbReference type="GO" id="GO:0003700">
    <property type="term" value="F:DNA-binding transcription factor activity"/>
    <property type="evidence" value="ECO:0000314"/>
    <property type="project" value="MGI"/>
</dbReference>
<dbReference type="GO" id="GO:0003723">
    <property type="term" value="F:RNA binding"/>
    <property type="evidence" value="ECO:0007669"/>
    <property type="project" value="InterPro"/>
</dbReference>
<dbReference type="GO" id="GO:0006351">
    <property type="term" value="P:DNA-templated transcription"/>
    <property type="evidence" value="ECO:0007669"/>
    <property type="project" value="InterPro"/>
</dbReference>
<dbReference type="GO" id="GO:0045944">
    <property type="term" value="P:positive regulation of transcription by RNA polymerase II"/>
    <property type="evidence" value="ECO:0000314"/>
    <property type="project" value="MGI"/>
</dbReference>
<dbReference type="InterPro" id="IPR028128">
    <property type="entry name" value="Vasculin_fam"/>
</dbReference>
<dbReference type="PANTHER" id="PTHR14339">
    <property type="entry name" value="VASCULIN"/>
    <property type="match status" value="1"/>
</dbReference>
<dbReference type="PANTHER" id="PTHR14339:SF11">
    <property type="entry name" value="VASCULIN"/>
    <property type="match status" value="1"/>
</dbReference>
<dbReference type="Pfam" id="PF15337">
    <property type="entry name" value="Vasculin"/>
    <property type="match status" value="1"/>
</dbReference>
<reference key="1">
    <citation type="journal article" date="2003" name="Mol. Cell. Biol.">
        <title>The murine G+C-rich promoter binding protein mGPBP is required for promoter-specific transcription.</title>
        <authorList>
            <person name="Hsu L.-C."/>
            <person name="Liu S."/>
            <person name="Abedinpour F."/>
            <person name="Beech R.D."/>
            <person name="Lahti J.M."/>
            <person name="Kidd V.J."/>
            <person name="Greenspan J.A."/>
            <person name="Yeung C.-Y."/>
        </authorList>
    </citation>
    <scope>NUCLEOTIDE SEQUENCE [MRNA] (ISOFORM 2)</scope>
    <scope>FUNCTION</scope>
    <scope>SUBCELLULAR LOCATION</scope>
    <scope>INTERACTION WITH GTF2B; GTF2F2; RNA POLYMERASE II AND TBP</scope>
    <scope>TISSUE SPECIFICITY</scope>
    <source>
        <strain>BALB/cJ</strain>
        <tissue>Brain</tissue>
    </source>
</reference>
<reference key="2">
    <citation type="journal article" date="2005" name="Science">
        <title>The transcriptional landscape of the mammalian genome.</title>
        <authorList>
            <person name="Carninci P."/>
            <person name="Kasukawa T."/>
            <person name="Katayama S."/>
            <person name="Gough J."/>
            <person name="Frith M.C."/>
            <person name="Maeda N."/>
            <person name="Oyama R."/>
            <person name="Ravasi T."/>
            <person name="Lenhard B."/>
            <person name="Wells C."/>
            <person name="Kodzius R."/>
            <person name="Shimokawa K."/>
            <person name="Bajic V.B."/>
            <person name="Brenner S.E."/>
            <person name="Batalov S."/>
            <person name="Forrest A.R."/>
            <person name="Zavolan M."/>
            <person name="Davis M.J."/>
            <person name="Wilming L.G."/>
            <person name="Aidinis V."/>
            <person name="Allen J.E."/>
            <person name="Ambesi-Impiombato A."/>
            <person name="Apweiler R."/>
            <person name="Aturaliya R.N."/>
            <person name="Bailey T.L."/>
            <person name="Bansal M."/>
            <person name="Baxter L."/>
            <person name="Beisel K.W."/>
            <person name="Bersano T."/>
            <person name="Bono H."/>
            <person name="Chalk A.M."/>
            <person name="Chiu K.P."/>
            <person name="Choudhary V."/>
            <person name="Christoffels A."/>
            <person name="Clutterbuck D.R."/>
            <person name="Crowe M.L."/>
            <person name="Dalla E."/>
            <person name="Dalrymple B.P."/>
            <person name="de Bono B."/>
            <person name="Della Gatta G."/>
            <person name="di Bernardo D."/>
            <person name="Down T."/>
            <person name="Engstrom P."/>
            <person name="Fagiolini M."/>
            <person name="Faulkner G."/>
            <person name="Fletcher C.F."/>
            <person name="Fukushima T."/>
            <person name="Furuno M."/>
            <person name="Futaki S."/>
            <person name="Gariboldi M."/>
            <person name="Georgii-Hemming P."/>
            <person name="Gingeras T.R."/>
            <person name="Gojobori T."/>
            <person name="Green R.E."/>
            <person name="Gustincich S."/>
            <person name="Harbers M."/>
            <person name="Hayashi Y."/>
            <person name="Hensch T.K."/>
            <person name="Hirokawa N."/>
            <person name="Hill D."/>
            <person name="Huminiecki L."/>
            <person name="Iacono M."/>
            <person name="Ikeo K."/>
            <person name="Iwama A."/>
            <person name="Ishikawa T."/>
            <person name="Jakt M."/>
            <person name="Kanapin A."/>
            <person name="Katoh M."/>
            <person name="Kawasawa Y."/>
            <person name="Kelso J."/>
            <person name="Kitamura H."/>
            <person name="Kitano H."/>
            <person name="Kollias G."/>
            <person name="Krishnan S.P."/>
            <person name="Kruger A."/>
            <person name="Kummerfeld S.K."/>
            <person name="Kurochkin I.V."/>
            <person name="Lareau L.F."/>
            <person name="Lazarevic D."/>
            <person name="Lipovich L."/>
            <person name="Liu J."/>
            <person name="Liuni S."/>
            <person name="McWilliam S."/>
            <person name="Madan Babu M."/>
            <person name="Madera M."/>
            <person name="Marchionni L."/>
            <person name="Matsuda H."/>
            <person name="Matsuzawa S."/>
            <person name="Miki H."/>
            <person name="Mignone F."/>
            <person name="Miyake S."/>
            <person name="Morris K."/>
            <person name="Mottagui-Tabar S."/>
            <person name="Mulder N."/>
            <person name="Nakano N."/>
            <person name="Nakauchi H."/>
            <person name="Ng P."/>
            <person name="Nilsson R."/>
            <person name="Nishiguchi S."/>
            <person name="Nishikawa S."/>
            <person name="Nori F."/>
            <person name="Ohara O."/>
            <person name="Okazaki Y."/>
            <person name="Orlando V."/>
            <person name="Pang K.C."/>
            <person name="Pavan W.J."/>
            <person name="Pavesi G."/>
            <person name="Pesole G."/>
            <person name="Petrovsky N."/>
            <person name="Piazza S."/>
            <person name="Reed J."/>
            <person name="Reid J.F."/>
            <person name="Ring B.Z."/>
            <person name="Ringwald M."/>
            <person name="Rost B."/>
            <person name="Ruan Y."/>
            <person name="Salzberg S.L."/>
            <person name="Sandelin A."/>
            <person name="Schneider C."/>
            <person name="Schoenbach C."/>
            <person name="Sekiguchi K."/>
            <person name="Semple C.A."/>
            <person name="Seno S."/>
            <person name="Sessa L."/>
            <person name="Sheng Y."/>
            <person name="Shibata Y."/>
            <person name="Shimada H."/>
            <person name="Shimada K."/>
            <person name="Silva D."/>
            <person name="Sinclair B."/>
            <person name="Sperling S."/>
            <person name="Stupka E."/>
            <person name="Sugiura K."/>
            <person name="Sultana R."/>
            <person name="Takenaka Y."/>
            <person name="Taki K."/>
            <person name="Tammoja K."/>
            <person name="Tan S.L."/>
            <person name="Tang S."/>
            <person name="Taylor M.S."/>
            <person name="Tegner J."/>
            <person name="Teichmann S.A."/>
            <person name="Ueda H.R."/>
            <person name="van Nimwegen E."/>
            <person name="Verardo R."/>
            <person name="Wei C.L."/>
            <person name="Yagi K."/>
            <person name="Yamanishi H."/>
            <person name="Zabarovsky E."/>
            <person name="Zhu S."/>
            <person name="Zimmer A."/>
            <person name="Hide W."/>
            <person name="Bult C."/>
            <person name="Grimmond S.M."/>
            <person name="Teasdale R.D."/>
            <person name="Liu E.T."/>
            <person name="Brusic V."/>
            <person name="Quackenbush J."/>
            <person name="Wahlestedt C."/>
            <person name="Mattick J.S."/>
            <person name="Hume D.A."/>
            <person name="Kai C."/>
            <person name="Sasaki D."/>
            <person name="Tomaru Y."/>
            <person name="Fukuda S."/>
            <person name="Kanamori-Katayama M."/>
            <person name="Suzuki M."/>
            <person name="Aoki J."/>
            <person name="Arakawa T."/>
            <person name="Iida J."/>
            <person name="Imamura K."/>
            <person name="Itoh M."/>
            <person name="Kato T."/>
            <person name="Kawaji H."/>
            <person name="Kawagashira N."/>
            <person name="Kawashima T."/>
            <person name="Kojima M."/>
            <person name="Kondo S."/>
            <person name="Konno H."/>
            <person name="Nakano K."/>
            <person name="Ninomiya N."/>
            <person name="Nishio T."/>
            <person name="Okada M."/>
            <person name="Plessy C."/>
            <person name="Shibata K."/>
            <person name="Shiraki T."/>
            <person name="Suzuki S."/>
            <person name="Tagami M."/>
            <person name="Waki K."/>
            <person name="Watahiki A."/>
            <person name="Okamura-Oho Y."/>
            <person name="Suzuki H."/>
            <person name="Kawai J."/>
            <person name="Hayashizaki Y."/>
        </authorList>
    </citation>
    <scope>NUCLEOTIDE SEQUENCE [LARGE SCALE MRNA] (ISOFORMS 1 AND 2)</scope>
    <source>
        <strain>C57BL/6J</strain>
        <tissue>Cerebellum</tissue>
        <tissue>Egg</tissue>
        <tissue>Embryo</tissue>
        <tissue>Olfactory bulb</tissue>
        <tissue>Stomach</tissue>
    </source>
</reference>
<reference key="3">
    <citation type="journal article" date="2004" name="Genome Res.">
        <title>The status, quality, and expansion of the NIH full-length cDNA project: the Mammalian Gene Collection (MGC).</title>
        <authorList>
            <consortium name="The MGC Project Team"/>
        </authorList>
    </citation>
    <scope>NUCLEOTIDE SEQUENCE [LARGE SCALE MRNA] (ISOFORMS 1 AND 3)</scope>
    <source>
        <strain>C57BL/6J</strain>
        <tissue>Brain</tissue>
        <tissue>Eye</tissue>
        <tissue>Retina</tissue>
    </source>
</reference>
<reference key="4">
    <citation type="journal article" date="2009" name="Immunity">
        <title>The phagosomal proteome in interferon-gamma-activated macrophages.</title>
        <authorList>
            <person name="Trost M."/>
            <person name="English L."/>
            <person name="Lemieux S."/>
            <person name="Courcelles M."/>
            <person name="Desjardins M."/>
            <person name="Thibault P."/>
        </authorList>
    </citation>
    <scope>PHOSPHORYLATION [LARGE SCALE ANALYSIS] AT SER-49</scope>
    <scope>IDENTIFICATION BY MASS SPECTROMETRY [LARGE SCALE ANALYSIS]</scope>
</reference>
<reference key="5">
    <citation type="journal article" date="2010" name="Cell">
        <title>A tissue-specific atlas of mouse protein phosphorylation and expression.</title>
        <authorList>
            <person name="Huttlin E.L."/>
            <person name="Jedrychowski M.P."/>
            <person name="Elias J.E."/>
            <person name="Goswami T."/>
            <person name="Rad R."/>
            <person name="Beausoleil S.A."/>
            <person name="Villen J."/>
            <person name="Haas W."/>
            <person name="Sowa M.E."/>
            <person name="Gygi S.P."/>
        </authorList>
    </citation>
    <scope>PHOSPHORYLATION [LARGE SCALE ANALYSIS] AT SER-274 AND SER-276</scope>
    <scope>IDENTIFICATION BY MASS SPECTROMETRY [LARGE SCALE ANALYSIS]</scope>
    <source>
        <tissue>Testis</tissue>
    </source>
</reference>
<keyword id="KW-0010">Activator</keyword>
<keyword id="KW-0025">Alternative splicing</keyword>
<keyword id="KW-0238">DNA-binding</keyword>
<keyword id="KW-0488">Methylation</keyword>
<keyword id="KW-0539">Nucleus</keyword>
<keyword id="KW-0597">Phosphoprotein</keyword>
<keyword id="KW-1185">Reference proteome</keyword>
<keyword id="KW-0804">Transcription</keyword>
<keyword id="KW-0805">Transcription regulation</keyword>
<gene>
    <name type="primary">Gpbp1</name>
    <name type="synonym">Gpbp</name>
</gene>
<feature type="chain" id="PRO_0000324111" description="Vasculin">
    <location>
        <begin position="1"/>
        <end position="473"/>
    </location>
</feature>
<feature type="region of interest" description="Disordered" evidence="2">
    <location>
        <begin position="1"/>
        <end position="25"/>
    </location>
</feature>
<feature type="region of interest" description="Disordered" evidence="2">
    <location>
        <begin position="44"/>
        <end position="170"/>
    </location>
</feature>
<feature type="region of interest" description="Disordered" evidence="2">
    <location>
        <begin position="186"/>
        <end position="341"/>
    </location>
</feature>
<feature type="region of interest" description="Disordered" evidence="2">
    <location>
        <begin position="450"/>
        <end position="473"/>
    </location>
</feature>
<feature type="compositionally biased region" description="Polar residues" evidence="2">
    <location>
        <begin position="94"/>
        <end position="117"/>
    </location>
</feature>
<feature type="compositionally biased region" description="Basic and acidic residues" evidence="2">
    <location>
        <begin position="119"/>
        <end position="133"/>
    </location>
</feature>
<feature type="compositionally biased region" description="Polar residues" evidence="2">
    <location>
        <begin position="193"/>
        <end position="204"/>
    </location>
</feature>
<feature type="compositionally biased region" description="Polar residues" evidence="2">
    <location>
        <begin position="248"/>
        <end position="286"/>
    </location>
</feature>
<feature type="compositionally biased region" description="Basic and acidic residues" evidence="2">
    <location>
        <begin position="293"/>
        <end position="329"/>
    </location>
</feature>
<feature type="compositionally biased region" description="Acidic residues" evidence="2">
    <location>
        <begin position="456"/>
        <end position="473"/>
    </location>
</feature>
<feature type="modified residue" description="Phosphoserine" evidence="8">
    <location>
        <position position="49"/>
    </location>
</feature>
<feature type="modified residue" description="Omega-N-methylarginine" evidence="1">
    <location>
        <position position="87"/>
    </location>
</feature>
<feature type="modified residue" description="Phosphoserine" evidence="9">
    <location>
        <position position="274"/>
    </location>
</feature>
<feature type="modified residue" description="Phosphoserine" evidence="9">
    <location>
        <position position="276"/>
    </location>
</feature>
<feature type="modified residue" description="Phosphoserine" evidence="1">
    <location>
        <position position="322"/>
    </location>
</feature>
<feature type="modified residue" description="Phosphoserine" evidence="1">
    <location>
        <position position="381"/>
    </location>
</feature>
<feature type="splice variant" id="VSP_032138" description="In isoform 3." evidence="5">
    <original>QHDFAPAWLNFPTPPSSTKSSLNFEKHSENFSWTENRYDVSRRRHNSSDGFDSGIGRPNGGNFGRKEKNGWRTHGRNGTENINHRGGYHGGNSRSRSSIFHSGKSQGLHENSIPDNETGRKEDKRERRQFEAEDF</original>
    <variation>LILVLDVLME</variation>
    <location>
        <begin position="3"/>
        <end position="137"/>
    </location>
</feature>
<feature type="splice variant" id="VSP_032139" description="In isoform 2 and isoform 3." evidence="4 5 6">
    <original>W</original>
    <variation>WGLHAQTHTYPTKKISQAPLL</variation>
    <location>
        <position position="159"/>
    </location>
</feature>
<feature type="sequence conflict" description="In Ref. 1; AAQ88446." evidence="7" ref="1">
    <original>G</original>
    <variation>S</variation>
    <location>
        <position position="204"/>
    </location>
</feature>
<feature type="sequence conflict" description="In Ref. 1; AAQ88446." evidence="7" ref="1">
    <original>M</original>
    <variation>I</variation>
    <location>
        <position position="361"/>
    </location>
</feature>
<protein>
    <recommendedName>
        <fullName>Vasculin</fullName>
    </recommendedName>
    <alternativeName>
        <fullName>GC-rich promoter-binding protein 1</fullName>
        <shortName>mGPBP</shortName>
    </alternativeName>
</protein>
<organism>
    <name type="scientific">Mus musculus</name>
    <name type="common">Mouse</name>
    <dbReference type="NCBI Taxonomy" id="10090"/>
    <lineage>
        <taxon>Eukaryota</taxon>
        <taxon>Metazoa</taxon>
        <taxon>Chordata</taxon>
        <taxon>Craniata</taxon>
        <taxon>Vertebrata</taxon>
        <taxon>Euteleostomi</taxon>
        <taxon>Mammalia</taxon>
        <taxon>Eutheria</taxon>
        <taxon>Euarchontoglires</taxon>
        <taxon>Glires</taxon>
        <taxon>Rodentia</taxon>
        <taxon>Myomorpha</taxon>
        <taxon>Muroidea</taxon>
        <taxon>Muridae</taxon>
        <taxon>Murinae</taxon>
        <taxon>Mus</taxon>
        <taxon>Mus</taxon>
    </lineage>
</organism>